<gene>
    <name type="ORF">GA17951</name>
</gene>
<reference key="1">
    <citation type="journal article" date="2005" name="Genome Res.">
        <title>Comparative genome sequencing of Drosophila pseudoobscura: chromosomal, gene, and cis-element evolution.</title>
        <authorList>
            <person name="Richards S."/>
            <person name="Liu Y."/>
            <person name="Bettencourt B.R."/>
            <person name="Hradecky P."/>
            <person name="Letovsky S."/>
            <person name="Nielsen R."/>
            <person name="Thornton K."/>
            <person name="Hubisz M.J."/>
            <person name="Chen R."/>
            <person name="Meisel R.P."/>
            <person name="Couronne O."/>
            <person name="Hua S."/>
            <person name="Smith M.A."/>
            <person name="Zhang P."/>
            <person name="Liu J."/>
            <person name="Bussemaker H.J."/>
            <person name="van Batenburg M.F."/>
            <person name="Howells S.L."/>
            <person name="Scherer S.E."/>
            <person name="Sodergren E."/>
            <person name="Matthews B.B."/>
            <person name="Crosby M.A."/>
            <person name="Schroeder A.J."/>
            <person name="Ortiz-Barrientos D."/>
            <person name="Rives C.M."/>
            <person name="Metzker M.L."/>
            <person name="Muzny D.M."/>
            <person name="Scott G."/>
            <person name="Steffen D."/>
            <person name="Wheeler D.A."/>
            <person name="Worley K.C."/>
            <person name="Havlak P."/>
            <person name="Durbin K.J."/>
            <person name="Egan A."/>
            <person name="Gill R."/>
            <person name="Hume J."/>
            <person name="Morgan M.B."/>
            <person name="Miner G."/>
            <person name="Hamilton C."/>
            <person name="Huang Y."/>
            <person name="Waldron L."/>
            <person name="Verduzco D."/>
            <person name="Clerc-Blankenburg K.P."/>
            <person name="Dubchak I."/>
            <person name="Noor M.A.F."/>
            <person name="Anderson W."/>
            <person name="White K.P."/>
            <person name="Clark A.G."/>
            <person name="Schaeffer S.W."/>
            <person name="Gelbart W.M."/>
            <person name="Weinstock G.M."/>
            <person name="Gibbs R.A."/>
        </authorList>
    </citation>
    <scope>NUCLEOTIDE SEQUENCE [LARGE SCALE GENOMIC DNA]</scope>
    <source>
        <strain>MV2-25 / Tucson 14011-0121.94</strain>
    </source>
</reference>
<keyword id="KW-1185">Reference proteome</keyword>
<comment type="similarity">
    <text evidence="1">Belongs to the TNFAIP8 family.</text>
</comment>
<organism>
    <name type="scientific">Drosophila pseudoobscura pseudoobscura</name>
    <name type="common">Fruit fly</name>
    <dbReference type="NCBI Taxonomy" id="46245"/>
    <lineage>
        <taxon>Eukaryota</taxon>
        <taxon>Metazoa</taxon>
        <taxon>Ecdysozoa</taxon>
        <taxon>Arthropoda</taxon>
        <taxon>Hexapoda</taxon>
        <taxon>Insecta</taxon>
        <taxon>Pterygota</taxon>
        <taxon>Neoptera</taxon>
        <taxon>Endopterygota</taxon>
        <taxon>Diptera</taxon>
        <taxon>Brachycera</taxon>
        <taxon>Muscomorpha</taxon>
        <taxon>Ephydroidea</taxon>
        <taxon>Drosophilidae</taxon>
        <taxon>Drosophila</taxon>
        <taxon>Sophophora</taxon>
    </lineage>
</organism>
<name>TFP8L_DROPS</name>
<proteinExistence type="inferred from homology"/>
<sequence length="188" mass="21327">MADNVFKSQDIGLRAQKKILSRMATKNIAKTFIDGTTASLLDNLYRLCKMHTGNKAKAEKLIKNIIKIVIKIGVLHRNNQFSDEELQRAENFKRKFQNTQLSIISFYEVDYTFDLAYLQKSIAESQVALKSIVQPHLTDKSLGRIDEVFDFFGDAVLLETAFKPDSPYREVMGKIVADINSAMETGDI</sequence>
<dbReference type="EMBL" id="CM000071">
    <property type="protein sequence ID" value="EAL25653.2"/>
    <property type="status" value="ALT_SEQ"/>
    <property type="molecule type" value="Genomic_DNA"/>
</dbReference>
<dbReference type="RefSeq" id="XP_004444228.1">
    <property type="nucleotide sequence ID" value="XM_004444171.2"/>
</dbReference>
<dbReference type="SMR" id="Q28ZG0"/>
<dbReference type="FunCoup" id="Q28ZG0">
    <property type="interactions" value="232"/>
</dbReference>
<dbReference type="STRING" id="46245.Q28ZG0"/>
<dbReference type="EnsemblMetazoa" id="FBtr0380863">
    <property type="protein sequence ID" value="FBpp0341214"/>
    <property type="gene ID" value="FBgn0077960"/>
</dbReference>
<dbReference type="KEGG" id="dpo:4804529"/>
<dbReference type="CTD" id="37751"/>
<dbReference type="eggNOG" id="ENOG502S00N">
    <property type="taxonomic scope" value="Eukaryota"/>
</dbReference>
<dbReference type="HOGENOM" id="CLU_085918_1_0_1"/>
<dbReference type="InParanoid" id="Q28ZG0"/>
<dbReference type="PhylomeDB" id="Q28ZG0"/>
<dbReference type="Proteomes" id="UP000001819">
    <property type="component" value="Chromosome 3"/>
</dbReference>
<dbReference type="Bgee" id="FBgn0077960">
    <property type="expression patterns" value="Expressed in female reproductive system and 2 other cell types or tissues"/>
</dbReference>
<dbReference type="GO" id="GO:0005737">
    <property type="term" value="C:cytoplasm"/>
    <property type="evidence" value="ECO:0000250"/>
    <property type="project" value="UniProtKB"/>
</dbReference>
<dbReference type="GO" id="GO:0043027">
    <property type="term" value="F:cysteine-type endopeptidase inhibitor activity involved in apoptotic process"/>
    <property type="evidence" value="ECO:0000250"/>
    <property type="project" value="UniProtKB"/>
</dbReference>
<dbReference type="GO" id="GO:0043065">
    <property type="term" value="P:positive regulation of apoptotic process"/>
    <property type="evidence" value="ECO:0000250"/>
    <property type="project" value="UniProtKB"/>
</dbReference>
<dbReference type="FunFam" id="1.20.1440.160:FF:000001">
    <property type="entry name" value="Tumor necrosis factor alpha-induced protein 8-like 1"/>
    <property type="match status" value="1"/>
</dbReference>
<dbReference type="Gene3D" id="1.20.1440.160">
    <property type="entry name" value="Tumor necrosis factor alpha-induced protein 8-like"/>
    <property type="match status" value="1"/>
</dbReference>
<dbReference type="InterPro" id="IPR008477">
    <property type="entry name" value="TNFAIP8-like"/>
</dbReference>
<dbReference type="InterPro" id="IPR038355">
    <property type="entry name" value="TNFAIP8_sf"/>
</dbReference>
<dbReference type="PANTHER" id="PTHR12757:SF1">
    <property type="entry name" value="PROTEIN SALIVARY GLANDS MARRED"/>
    <property type="match status" value="1"/>
</dbReference>
<dbReference type="PANTHER" id="PTHR12757">
    <property type="entry name" value="TUMOR NECROSIS FACTOR INDUCED PROTEIN"/>
    <property type="match status" value="1"/>
</dbReference>
<dbReference type="Pfam" id="PF05527">
    <property type="entry name" value="DUF758"/>
    <property type="match status" value="1"/>
</dbReference>
<evidence type="ECO:0000305" key="1"/>
<protein>
    <recommendedName>
        <fullName>Tumor necrosis factor alpha-induced protein 8-like protein</fullName>
        <shortName>TNF alpha-induced protein 8-like protein</shortName>
    </recommendedName>
</protein>
<accession>Q28ZG0</accession>
<feature type="chain" id="PRO_0000285781" description="Tumor necrosis factor alpha-induced protein 8-like protein">
    <location>
        <begin position="1"/>
        <end position="188"/>
    </location>
</feature>